<sequence>MTNLLPEMAEIWQQTLNWQPTDSQQARFQQLYELILEGNRQLNLTRITEPQEFWEKHLWDSLRGVAPQQQLISFLPVGASVIDIGTGAGFPGVPVAIIAPNSTMTLVDSTRKKIAFIESILKELGLTNAKTLVSRAEEIGQQPQHREQYDVALIRAVGTASACAEYTLPLLKLGGLAVIYRGTWTEEETTSLENAVRQLGGTVELIDNFTTPLTNSVRHCLYLRKVAKTPANFPRAVGVPTQKPI</sequence>
<keyword id="KW-0963">Cytoplasm</keyword>
<keyword id="KW-0489">Methyltransferase</keyword>
<keyword id="KW-0698">rRNA processing</keyword>
<keyword id="KW-0949">S-adenosyl-L-methionine</keyword>
<keyword id="KW-0808">Transferase</keyword>
<evidence type="ECO:0000255" key="1">
    <source>
        <dbReference type="HAMAP-Rule" id="MF_00074"/>
    </source>
</evidence>
<comment type="function">
    <text evidence="1">Specifically methylates the N7 position of a guanine in 16S rRNA.</text>
</comment>
<comment type="subcellular location">
    <subcellularLocation>
        <location evidence="1">Cytoplasm</location>
    </subcellularLocation>
</comment>
<comment type="similarity">
    <text evidence="1">Belongs to the methyltransferase superfamily. RNA methyltransferase RsmG family.</text>
</comment>
<protein>
    <recommendedName>
        <fullName evidence="1">Ribosomal RNA small subunit methyltransferase G</fullName>
        <ecNumber evidence="1">2.1.1.-</ecNumber>
    </recommendedName>
    <alternativeName>
        <fullName evidence="1">16S rRNA 7-methylguanosine methyltransferase</fullName>
        <shortName evidence="1">16S rRNA m7G methyltransferase</shortName>
    </alternativeName>
</protein>
<proteinExistence type="inferred from homology"/>
<dbReference type="EC" id="2.1.1.-" evidence="1"/>
<dbReference type="EMBL" id="CP000117">
    <property type="protein sequence ID" value="ABA23485.1"/>
    <property type="molecule type" value="Genomic_DNA"/>
</dbReference>
<dbReference type="SMR" id="Q3M6A1"/>
<dbReference type="STRING" id="240292.Ava_3880"/>
<dbReference type="KEGG" id="ava:Ava_3880"/>
<dbReference type="eggNOG" id="COG0357">
    <property type="taxonomic scope" value="Bacteria"/>
</dbReference>
<dbReference type="HOGENOM" id="CLU_065341_0_2_3"/>
<dbReference type="Proteomes" id="UP000002533">
    <property type="component" value="Chromosome"/>
</dbReference>
<dbReference type="GO" id="GO:0005829">
    <property type="term" value="C:cytosol"/>
    <property type="evidence" value="ECO:0007669"/>
    <property type="project" value="TreeGrafter"/>
</dbReference>
<dbReference type="GO" id="GO:0070043">
    <property type="term" value="F:rRNA (guanine-N7-)-methyltransferase activity"/>
    <property type="evidence" value="ECO:0007669"/>
    <property type="project" value="UniProtKB-UniRule"/>
</dbReference>
<dbReference type="CDD" id="cd02440">
    <property type="entry name" value="AdoMet_MTases"/>
    <property type="match status" value="1"/>
</dbReference>
<dbReference type="FunFam" id="3.40.50.150:FF:000041">
    <property type="entry name" value="Ribosomal RNA small subunit methyltransferase G"/>
    <property type="match status" value="1"/>
</dbReference>
<dbReference type="Gene3D" id="3.40.50.150">
    <property type="entry name" value="Vaccinia Virus protein VP39"/>
    <property type="match status" value="1"/>
</dbReference>
<dbReference type="HAMAP" id="MF_00074">
    <property type="entry name" value="16SrRNA_methyltr_G"/>
    <property type="match status" value="1"/>
</dbReference>
<dbReference type="InterPro" id="IPR003682">
    <property type="entry name" value="rRNA_ssu_MeTfrase_G"/>
</dbReference>
<dbReference type="InterPro" id="IPR029063">
    <property type="entry name" value="SAM-dependent_MTases_sf"/>
</dbReference>
<dbReference type="NCBIfam" id="TIGR00138">
    <property type="entry name" value="rsmG_gidB"/>
    <property type="match status" value="1"/>
</dbReference>
<dbReference type="PANTHER" id="PTHR31760">
    <property type="entry name" value="S-ADENOSYL-L-METHIONINE-DEPENDENT METHYLTRANSFERASES SUPERFAMILY PROTEIN"/>
    <property type="match status" value="1"/>
</dbReference>
<dbReference type="PANTHER" id="PTHR31760:SF0">
    <property type="entry name" value="S-ADENOSYL-L-METHIONINE-DEPENDENT METHYLTRANSFERASES SUPERFAMILY PROTEIN"/>
    <property type="match status" value="1"/>
</dbReference>
<dbReference type="Pfam" id="PF02527">
    <property type="entry name" value="GidB"/>
    <property type="match status" value="1"/>
</dbReference>
<dbReference type="PIRSF" id="PIRSF003078">
    <property type="entry name" value="GidB"/>
    <property type="match status" value="1"/>
</dbReference>
<dbReference type="SUPFAM" id="SSF53335">
    <property type="entry name" value="S-adenosyl-L-methionine-dependent methyltransferases"/>
    <property type="match status" value="1"/>
</dbReference>
<reference key="1">
    <citation type="journal article" date="2014" name="Stand. Genomic Sci.">
        <title>Complete genome sequence of Anabaena variabilis ATCC 29413.</title>
        <authorList>
            <person name="Thiel T."/>
            <person name="Pratte B.S."/>
            <person name="Zhong J."/>
            <person name="Goodwin L."/>
            <person name="Copeland A."/>
            <person name="Lucas S."/>
            <person name="Han C."/>
            <person name="Pitluck S."/>
            <person name="Land M.L."/>
            <person name="Kyrpides N.C."/>
            <person name="Woyke T."/>
        </authorList>
    </citation>
    <scope>NUCLEOTIDE SEQUENCE [LARGE SCALE GENOMIC DNA]</scope>
    <source>
        <strain>ATCC 29413 / PCC 7937</strain>
    </source>
</reference>
<organism>
    <name type="scientific">Trichormus variabilis (strain ATCC 29413 / PCC 7937)</name>
    <name type="common">Anabaena variabilis</name>
    <dbReference type="NCBI Taxonomy" id="240292"/>
    <lineage>
        <taxon>Bacteria</taxon>
        <taxon>Bacillati</taxon>
        <taxon>Cyanobacteriota</taxon>
        <taxon>Cyanophyceae</taxon>
        <taxon>Nostocales</taxon>
        <taxon>Nostocaceae</taxon>
        <taxon>Trichormus</taxon>
    </lineage>
</organism>
<feature type="chain" id="PRO_1000010116" description="Ribosomal RNA small subunit methyltransferase G">
    <location>
        <begin position="1"/>
        <end position="245"/>
    </location>
</feature>
<feature type="binding site" evidence="1">
    <location>
        <position position="85"/>
    </location>
    <ligand>
        <name>S-adenosyl-L-methionine</name>
        <dbReference type="ChEBI" id="CHEBI:59789"/>
    </ligand>
</feature>
<feature type="binding site" evidence="1">
    <location>
        <position position="90"/>
    </location>
    <ligand>
        <name>S-adenosyl-L-methionine</name>
        <dbReference type="ChEBI" id="CHEBI:59789"/>
    </ligand>
</feature>
<feature type="binding site" evidence="1">
    <location>
        <begin position="108"/>
        <end position="110"/>
    </location>
    <ligand>
        <name>S-adenosyl-L-methionine</name>
        <dbReference type="ChEBI" id="CHEBI:59789"/>
    </ligand>
</feature>
<feature type="binding site" evidence="1">
    <location>
        <begin position="136"/>
        <end position="137"/>
    </location>
    <ligand>
        <name>S-adenosyl-L-methionine</name>
        <dbReference type="ChEBI" id="CHEBI:59789"/>
    </ligand>
</feature>
<feature type="binding site" evidence="1">
    <location>
        <position position="155"/>
    </location>
    <ligand>
        <name>S-adenosyl-L-methionine</name>
        <dbReference type="ChEBI" id="CHEBI:59789"/>
    </ligand>
</feature>
<accession>Q3M6A1</accession>
<name>RSMG_TRIV2</name>
<gene>
    <name evidence="1" type="primary">rsmG</name>
    <name type="ordered locus">Ava_3880</name>
</gene>